<dbReference type="EC" id="2.1.3.2" evidence="1"/>
<dbReference type="EMBL" id="CP000489">
    <property type="protein sequence ID" value="ABL70642.1"/>
    <property type="molecule type" value="Genomic_DNA"/>
</dbReference>
<dbReference type="RefSeq" id="WP_011748835.1">
    <property type="nucleotide sequence ID" value="NC_008686.1"/>
</dbReference>
<dbReference type="SMR" id="A1B548"/>
<dbReference type="STRING" id="318586.Pden_2555"/>
<dbReference type="EnsemblBacteria" id="ABL70642">
    <property type="protein sequence ID" value="ABL70642"/>
    <property type="gene ID" value="Pden_2555"/>
</dbReference>
<dbReference type="GeneID" id="93450948"/>
<dbReference type="KEGG" id="pde:Pden_2555"/>
<dbReference type="eggNOG" id="COG0540">
    <property type="taxonomic scope" value="Bacteria"/>
</dbReference>
<dbReference type="HOGENOM" id="CLU_043846_2_0_5"/>
<dbReference type="OrthoDB" id="9774690at2"/>
<dbReference type="UniPathway" id="UPA00070">
    <property type="reaction ID" value="UER00116"/>
</dbReference>
<dbReference type="Proteomes" id="UP000000361">
    <property type="component" value="Chromosome 1"/>
</dbReference>
<dbReference type="GO" id="GO:0005829">
    <property type="term" value="C:cytosol"/>
    <property type="evidence" value="ECO:0007669"/>
    <property type="project" value="TreeGrafter"/>
</dbReference>
<dbReference type="GO" id="GO:0016597">
    <property type="term" value="F:amino acid binding"/>
    <property type="evidence" value="ECO:0007669"/>
    <property type="project" value="InterPro"/>
</dbReference>
<dbReference type="GO" id="GO:0004070">
    <property type="term" value="F:aspartate carbamoyltransferase activity"/>
    <property type="evidence" value="ECO:0007669"/>
    <property type="project" value="UniProtKB-UniRule"/>
</dbReference>
<dbReference type="GO" id="GO:0006207">
    <property type="term" value="P:'de novo' pyrimidine nucleobase biosynthetic process"/>
    <property type="evidence" value="ECO:0007669"/>
    <property type="project" value="InterPro"/>
</dbReference>
<dbReference type="GO" id="GO:0044205">
    <property type="term" value="P:'de novo' UMP biosynthetic process"/>
    <property type="evidence" value="ECO:0007669"/>
    <property type="project" value="UniProtKB-UniRule"/>
</dbReference>
<dbReference type="GO" id="GO:0006520">
    <property type="term" value="P:amino acid metabolic process"/>
    <property type="evidence" value="ECO:0007669"/>
    <property type="project" value="InterPro"/>
</dbReference>
<dbReference type="FunFam" id="3.40.50.1370:FF:000007">
    <property type="entry name" value="Aspartate carbamoyltransferase"/>
    <property type="match status" value="1"/>
</dbReference>
<dbReference type="Gene3D" id="3.40.50.1370">
    <property type="entry name" value="Aspartate/ornithine carbamoyltransferase"/>
    <property type="match status" value="2"/>
</dbReference>
<dbReference type="HAMAP" id="MF_00001">
    <property type="entry name" value="Asp_carb_tr"/>
    <property type="match status" value="1"/>
</dbReference>
<dbReference type="InterPro" id="IPR006132">
    <property type="entry name" value="Asp/Orn_carbamoyltranf_P-bd"/>
</dbReference>
<dbReference type="InterPro" id="IPR006130">
    <property type="entry name" value="Asp/Orn_carbamoylTrfase"/>
</dbReference>
<dbReference type="InterPro" id="IPR036901">
    <property type="entry name" value="Asp/Orn_carbamoylTrfase_sf"/>
</dbReference>
<dbReference type="InterPro" id="IPR002082">
    <property type="entry name" value="Asp_carbamoyltransf"/>
</dbReference>
<dbReference type="InterPro" id="IPR006131">
    <property type="entry name" value="Asp_carbamoyltransf_Asp/Orn-bd"/>
</dbReference>
<dbReference type="NCBIfam" id="TIGR00670">
    <property type="entry name" value="asp_carb_tr"/>
    <property type="match status" value="1"/>
</dbReference>
<dbReference type="NCBIfam" id="NF002032">
    <property type="entry name" value="PRK00856.1"/>
    <property type="match status" value="1"/>
</dbReference>
<dbReference type="PANTHER" id="PTHR45753:SF6">
    <property type="entry name" value="ASPARTATE CARBAMOYLTRANSFERASE"/>
    <property type="match status" value="1"/>
</dbReference>
<dbReference type="PANTHER" id="PTHR45753">
    <property type="entry name" value="ORNITHINE CARBAMOYLTRANSFERASE, MITOCHONDRIAL"/>
    <property type="match status" value="1"/>
</dbReference>
<dbReference type="Pfam" id="PF00185">
    <property type="entry name" value="OTCace"/>
    <property type="match status" value="1"/>
</dbReference>
<dbReference type="Pfam" id="PF02729">
    <property type="entry name" value="OTCace_N"/>
    <property type="match status" value="1"/>
</dbReference>
<dbReference type="PRINTS" id="PR00100">
    <property type="entry name" value="AOTCASE"/>
</dbReference>
<dbReference type="PRINTS" id="PR00101">
    <property type="entry name" value="ATCASE"/>
</dbReference>
<dbReference type="SUPFAM" id="SSF53671">
    <property type="entry name" value="Aspartate/ornithine carbamoyltransferase"/>
    <property type="match status" value="1"/>
</dbReference>
<dbReference type="PROSITE" id="PS00097">
    <property type="entry name" value="CARBAMOYLTRANSFERASE"/>
    <property type="match status" value="1"/>
</dbReference>
<accession>A1B548</accession>
<protein>
    <recommendedName>
        <fullName evidence="1">Aspartate carbamoyltransferase catalytic subunit</fullName>
        <ecNumber evidence="1">2.1.3.2</ecNumber>
    </recommendedName>
    <alternativeName>
        <fullName evidence="1">Aspartate transcarbamylase</fullName>
        <shortName evidence="1">ATCase</shortName>
    </alternativeName>
</protein>
<organism>
    <name type="scientific">Paracoccus denitrificans (strain Pd 1222)</name>
    <dbReference type="NCBI Taxonomy" id="318586"/>
    <lineage>
        <taxon>Bacteria</taxon>
        <taxon>Pseudomonadati</taxon>
        <taxon>Pseudomonadota</taxon>
        <taxon>Alphaproteobacteria</taxon>
        <taxon>Rhodobacterales</taxon>
        <taxon>Paracoccaceae</taxon>
        <taxon>Paracoccus</taxon>
    </lineage>
</organism>
<comment type="function">
    <text evidence="1">Catalyzes the condensation of carbamoyl phosphate and aspartate to form carbamoyl aspartate and inorganic phosphate, the committed step in the de novo pyrimidine nucleotide biosynthesis pathway.</text>
</comment>
<comment type="catalytic activity">
    <reaction evidence="1">
        <text>carbamoyl phosphate + L-aspartate = N-carbamoyl-L-aspartate + phosphate + H(+)</text>
        <dbReference type="Rhea" id="RHEA:20013"/>
        <dbReference type="ChEBI" id="CHEBI:15378"/>
        <dbReference type="ChEBI" id="CHEBI:29991"/>
        <dbReference type="ChEBI" id="CHEBI:32814"/>
        <dbReference type="ChEBI" id="CHEBI:43474"/>
        <dbReference type="ChEBI" id="CHEBI:58228"/>
        <dbReference type="EC" id="2.1.3.2"/>
    </reaction>
</comment>
<comment type="pathway">
    <text evidence="1">Pyrimidine metabolism; UMP biosynthesis via de novo pathway; (S)-dihydroorotate from bicarbonate: step 2/3.</text>
</comment>
<comment type="subunit">
    <text evidence="1">Heterododecamer (2C3:3R2) of six catalytic PyrB chains organized as two trimers (C3), and six regulatory PyrI chains organized as three dimers (R2).</text>
</comment>
<comment type="similarity">
    <text evidence="1">Belongs to the aspartate/ornithine carbamoyltransferase superfamily. ATCase family.</text>
</comment>
<proteinExistence type="inferred from homology"/>
<gene>
    <name evidence="1" type="primary">pyrB</name>
    <name type="ordered locus">Pden_2555</name>
</gene>
<name>PYRB_PARDP</name>
<reference key="1">
    <citation type="submission" date="2006-12" db="EMBL/GenBank/DDBJ databases">
        <title>Complete sequence of chromosome 1 of Paracoccus denitrificans PD1222.</title>
        <authorList>
            <person name="Copeland A."/>
            <person name="Lucas S."/>
            <person name="Lapidus A."/>
            <person name="Barry K."/>
            <person name="Detter J.C."/>
            <person name="Glavina del Rio T."/>
            <person name="Hammon N."/>
            <person name="Israni S."/>
            <person name="Dalin E."/>
            <person name="Tice H."/>
            <person name="Pitluck S."/>
            <person name="Munk A.C."/>
            <person name="Brettin T."/>
            <person name="Bruce D."/>
            <person name="Han C."/>
            <person name="Tapia R."/>
            <person name="Gilna P."/>
            <person name="Schmutz J."/>
            <person name="Larimer F."/>
            <person name="Land M."/>
            <person name="Hauser L."/>
            <person name="Kyrpides N."/>
            <person name="Lykidis A."/>
            <person name="Spiro S."/>
            <person name="Richardson D.J."/>
            <person name="Moir J.W.B."/>
            <person name="Ferguson S.J."/>
            <person name="van Spanning R.J.M."/>
            <person name="Richardson P."/>
        </authorList>
    </citation>
    <scope>NUCLEOTIDE SEQUENCE [LARGE SCALE GENOMIC DNA]</scope>
    <source>
        <strain>Pd 1222</strain>
    </source>
</reference>
<feature type="chain" id="PRO_0000321130" description="Aspartate carbamoyltransferase catalytic subunit">
    <location>
        <begin position="1"/>
        <end position="319"/>
    </location>
</feature>
<feature type="binding site" evidence="1">
    <location>
        <position position="57"/>
    </location>
    <ligand>
        <name>carbamoyl phosphate</name>
        <dbReference type="ChEBI" id="CHEBI:58228"/>
    </ligand>
</feature>
<feature type="binding site" evidence="1">
    <location>
        <position position="58"/>
    </location>
    <ligand>
        <name>carbamoyl phosphate</name>
        <dbReference type="ChEBI" id="CHEBI:58228"/>
    </ligand>
</feature>
<feature type="binding site" evidence="1">
    <location>
        <position position="85"/>
    </location>
    <ligand>
        <name>L-aspartate</name>
        <dbReference type="ChEBI" id="CHEBI:29991"/>
    </ligand>
</feature>
<feature type="binding site" evidence="1">
    <location>
        <position position="107"/>
    </location>
    <ligand>
        <name>carbamoyl phosphate</name>
        <dbReference type="ChEBI" id="CHEBI:58228"/>
    </ligand>
</feature>
<feature type="binding site" evidence="1">
    <location>
        <position position="135"/>
    </location>
    <ligand>
        <name>carbamoyl phosphate</name>
        <dbReference type="ChEBI" id="CHEBI:58228"/>
    </ligand>
</feature>
<feature type="binding site" evidence="1">
    <location>
        <position position="138"/>
    </location>
    <ligand>
        <name>carbamoyl phosphate</name>
        <dbReference type="ChEBI" id="CHEBI:58228"/>
    </ligand>
</feature>
<feature type="binding site" evidence="1">
    <location>
        <position position="168"/>
    </location>
    <ligand>
        <name>L-aspartate</name>
        <dbReference type="ChEBI" id="CHEBI:29991"/>
    </ligand>
</feature>
<feature type="binding site" evidence="1">
    <location>
        <position position="222"/>
    </location>
    <ligand>
        <name>L-aspartate</name>
        <dbReference type="ChEBI" id="CHEBI:29991"/>
    </ligand>
</feature>
<feature type="binding site" evidence="1">
    <location>
        <position position="263"/>
    </location>
    <ligand>
        <name>carbamoyl phosphate</name>
        <dbReference type="ChEBI" id="CHEBI:58228"/>
    </ligand>
</feature>
<feature type="binding site" evidence="1">
    <location>
        <position position="264"/>
    </location>
    <ligand>
        <name>carbamoyl phosphate</name>
        <dbReference type="ChEBI" id="CHEBI:58228"/>
    </ligand>
</feature>
<keyword id="KW-0665">Pyrimidine biosynthesis</keyword>
<keyword id="KW-1185">Reference proteome</keyword>
<keyword id="KW-0808">Transferase</keyword>
<sequence>MFRARHLLGIEPLAPPEITTLLDLAETYVDLNRRTVKHSDALAGMTQINMFFENSTRTQSSFELAGKRLGADVMNMAMQTSSVKKGETLIDTALTLNAMHPDLLVVRHPQSGAVDLLAQKVNCAVLNAGDGRHEHPTQALLDALTIRRAKGRLHRLTVAICGDIAHSRVARSNLILLGKMENRLRLVGPATLMPSGARDWGCEIHEDMREGLKGADVVMMLRLQKERMDGGFIPSEREYYHRWGLDAEKLALAAPDAIVMHPGPMNRGVEIDGTIADDINRSVIQDQVEMGVAVRMAAMDLLARNLRAERGAKAAEMMA</sequence>
<evidence type="ECO:0000255" key="1">
    <source>
        <dbReference type="HAMAP-Rule" id="MF_00001"/>
    </source>
</evidence>